<accession>Q5RBX2</accession>
<organism>
    <name type="scientific">Pongo abelii</name>
    <name type="common">Sumatran orangutan</name>
    <name type="synonym">Pongo pygmaeus abelii</name>
    <dbReference type="NCBI Taxonomy" id="9601"/>
    <lineage>
        <taxon>Eukaryota</taxon>
        <taxon>Metazoa</taxon>
        <taxon>Chordata</taxon>
        <taxon>Craniata</taxon>
        <taxon>Vertebrata</taxon>
        <taxon>Euteleostomi</taxon>
        <taxon>Mammalia</taxon>
        <taxon>Eutheria</taxon>
        <taxon>Euarchontoglires</taxon>
        <taxon>Primates</taxon>
        <taxon>Haplorrhini</taxon>
        <taxon>Catarrhini</taxon>
        <taxon>Hominidae</taxon>
        <taxon>Pongo</taxon>
    </lineage>
</organism>
<gene>
    <name evidence="2" type="primary">BET1L</name>
</gene>
<feature type="chain" id="PRO_0000233058" description="BET1-like protein">
    <location>
        <begin position="1"/>
        <end position="111"/>
    </location>
</feature>
<feature type="topological domain" description="Cytoplasmic" evidence="4">
    <location>
        <begin position="1"/>
        <end position="86"/>
    </location>
</feature>
<feature type="transmembrane region" description="Helical; Anchor for type IV membrane protein" evidence="4">
    <location>
        <begin position="87"/>
        <end position="107"/>
    </location>
</feature>
<feature type="topological domain" description="Lumenal" evidence="4">
    <location>
        <begin position="108"/>
        <end position="111"/>
    </location>
</feature>
<feature type="domain" description="t-SNARE coiled-coil homology" evidence="5">
    <location>
        <begin position="15"/>
        <end position="77"/>
    </location>
</feature>
<feature type="modified residue" description="Phosphoserine" evidence="3">
    <location>
        <position position="9"/>
    </location>
</feature>
<feature type="modified residue" description="Phosphoserine" evidence="3">
    <location>
        <position position="37"/>
    </location>
</feature>
<name>BET1L_PONAB</name>
<keyword id="KW-0175">Coiled coil</keyword>
<keyword id="KW-0333">Golgi apparatus</keyword>
<keyword id="KW-0472">Membrane</keyword>
<keyword id="KW-0597">Phosphoprotein</keyword>
<keyword id="KW-0653">Protein transport</keyword>
<keyword id="KW-1185">Reference proteome</keyword>
<keyword id="KW-0812">Transmembrane</keyword>
<keyword id="KW-1133">Transmembrane helix</keyword>
<keyword id="KW-0813">Transport</keyword>
<sequence>MADWARAQSPGAVEEILDRENKRMADNLASKVTRLKSLALDIDKDAEDQNRYLDGMDSDFTSMTGLLTGSVKRFSTMARSGRDNRKLLCGMAVGLIVAFFILSYFLSRART</sequence>
<reference evidence="6" key="1">
    <citation type="submission" date="2004-11" db="EMBL/GenBank/DDBJ databases">
        <authorList>
            <consortium name="The German cDNA consortium"/>
        </authorList>
    </citation>
    <scope>NUCLEOTIDE SEQUENCE [LARGE SCALE MRNA]</scope>
    <source>
        <tissue evidence="6">Kidney</tissue>
    </source>
</reference>
<dbReference type="EMBL" id="CR858510">
    <property type="protein sequence ID" value="CAH90738.1"/>
    <property type="molecule type" value="mRNA"/>
</dbReference>
<dbReference type="RefSeq" id="NP_001125411.1">
    <property type="nucleotide sequence ID" value="NM_001131939.1"/>
</dbReference>
<dbReference type="SMR" id="Q5RBX2"/>
<dbReference type="FunCoup" id="Q5RBX2">
    <property type="interactions" value="639"/>
</dbReference>
<dbReference type="STRING" id="9601.ENSPPYP00000022353"/>
<dbReference type="GeneID" id="100172318"/>
<dbReference type="KEGG" id="pon:100172318"/>
<dbReference type="CTD" id="51272"/>
<dbReference type="eggNOG" id="KOG3385">
    <property type="taxonomic scope" value="Eukaryota"/>
</dbReference>
<dbReference type="InParanoid" id="Q5RBX2"/>
<dbReference type="OrthoDB" id="261831at2759"/>
<dbReference type="Proteomes" id="UP000001595">
    <property type="component" value="Unplaced"/>
</dbReference>
<dbReference type="GO" id="GO:0000139">
    <property type="term" value="C:Golgi membrane"/>
    <property type="evidence" value="ECO:0007669"/>
    <property type="project" value="UniProtKB-SubCell"/>
</dbReference>
<dbReference type="GO" id="GO:0015031">
    <property type="term" value="P:protein transport"/>
    <property type="evidence" value="ECO:0007669"/>
    <property type="project" value="UniProtKB-KW"/>
</dbReference>
<dbReference type="CDD" id="cd15853">
    <property type="entry name" value="SNARE_Bet1"/>
    <property type="match status" value="1"/>
</dbReference>
<dbReference type="FunFam" id="1.20.5.110:FF:000038">
    <property type="entry name" value="BET1-like protein isoform X2"/>
    <property type="match status" value="1"/>
</dbReference>
<dbReference type="Gene3D" id="1.20.5.110">
    <property type="match status" value="1"/>
</dbReference>
<dbReference type="InterPro" id="IPR039899">
    <property type="entry name" value="BET1_SNARE"/>
</dbReference>
<dbReference type="InterPro" id="IPR000727">
    <property type="entry name" value="T_SNARE_dom"/>
</dbReference>
<dbReference type="PANTHER" id="PTHR12791">
    <property type="entry name" value="GOLGI SNARE BET1-RELATED"/>
    <property type="match status" value="1"/>
</dbReference>
<dbReference type="SUPFAM" id="SSF58038">
    <property type="entry name" value="SNARE fusion complex"/>
    <property type="match status" value="1"/>
</dbReference>
<dbReference type="PROSITE" id="PS50192">
    <property type="entry name" value="T_SNARE"/>
    <property type="match status" value="1"/>
</dbReference>
<proteinExistence type="inferred from homology"/>
<comment type="function">
    <text evidence="2">Vesicle SNARE required for targeting and fusion of retrograde transport vesicles with the Golgi complex. Required for the integrity of the Golgi complex (By similarity).</text>
</comment>
<comment type="subunit">
    <text evidence="2 3">Component of a SNARE complex consisting of STX5, YKT6, GOSR1 and BET1L. Interacts with STX5 (By similarity).</text>
</comment>
<comment type="subcellular location">
    <subcellularLocation>
        <location evidence="1">Golgi apparatus membrane</location>
        <topology evidence="1">Single-pass type IV membrane protein</topology>
    </subcellularLocation>
    <subcellularLocation>
        <location evidence="1">Golgi apparatus</location>
        <location evidence="1">trans-Golgi network membrane</location>
    </subcellularLocation>
    <text evidence="1">Present throughout the Golgi apparatus, with increasing concentration from cis-Golgi to the trans-Golgi face of the stacks.</text>
</comment>
<evidence type="ECO:0000250" key="1"/>
<evidence type="ECO:0000250" key="2">
    <source>
        <dbReference type="UniProtKB" id="O35152"/>
    </source>
</evidence>
<evidence type="ECO:0000250" key="3">
    <source>
        <dbReference type="UniProtKB" id="Q9NYM9"/>
    </source>
</evidence>
<evidence type="ECO:0000255" key="4"/>
<evidence type="ECO:0000255" key="5">
    <source>
        <dbReference type="PROSITE-ProRule" id="PRU00202"/>
    </source>
</evidence>
<evidence type="ECO:0000312" key="6">
    <source>
        <dbReference type="EMBL" id="CAH90738.1"/>
    </source>
</evidence>
<protein>
    <recommendedName>
        <fullName>BET1-like protein</fullName>
    </recommendedName>
</protein>